<proteinExistence type="inferred from homology"/>
<feature type="chain" id="PRO_0000060186" description="Spermidine/putrescine transport system permease protein PotC homolog">
    <location>
        <begin position="1"/>
        <end position="286"/>
    </location>
</feature>
<feature type="transmembrane region" description="Helical" evidence="2">
    <location>
        <begin position="15"/>
        <end position="35"/>
    </location>
</feature>
<feature type="transmembrane region" description="Helical" evidence="2">
    <location>
        <begin position="78"/>
        <end position="98"/>
    </location>
</feature>
<feature type="transmembrane region" description="Helical" evidence="2">
    <location>
        <begin position="113"/>
        <end position="133"/>
    </location>
</feature>
<feature type="transmembrane region" description="Helical" evidence="2">
    <location>
        <begin position="145"/>
        <end position="165"/>
    </location>
</feature>
<feature type="transmembrane region" description="Helical" evidence="2">
    <location>
        <begin position="191"/>
        <end position="211"/>
    </location>
</feature>
<feature type="transmembrane region" description="Helical" evidence="2">
    <location>
        <begin position="244"/>
        <end position="264"/>
    </location>
</feature>
<feature type="domain" description="ABC transmembrane type-1" evidence="2">
    <location>
        <begin position="74"/>
        <end position="264"/>
    </location>
</feature>
<dbReference type="EMBL" id="U00089">
    <property type="protein sequence ID" value="AAB95745.1"/>
    <property type="molecule type" value="Genomic_DNA"/>
</dbReference>
<dbReference type="PIR" id="S73423">
    <property type="entry name" value="S73423"/>
</dbReference>
<dbReference type="RefSeq" id="NP_109745.1">
    <property type="nucleotide sequence ID" value="NC_000912.1"/>
</dbReference>
<dbReference type="RefSeq" id="WP_010874414.1">
    <property type="nucleotide sequence ID" value="NC_000912.1"/>
</dbReference>
<dbReference type="SMR" id="P75057"/>
<dbReference type="STRING" id="272634.MPN_057"/>
<dbReference type="EnsemblBacteria" id="AAB95745">
    <property type="protein sequence ID" value="AAB95745"/>
    <property type="gene ID" value="MPN_057"/>
</dbReference>
<dbReference type="KEGG" id="mpn:MPN_057"/>
<dbReference type="PATRIC" id="fig|272634.6.peg.57"/>
<dbReference type="HOGENOM" id="CLU_016047_3_0_14"/>
<dbReference type="OrthoDB" id="9782004at2"/>
<dbReference type="BioCyc" id="MPNE272634:G1GJ3-92-MONOMER"/>
<dbReference type="Proteomes" id="UP000000808">
    <property type="component" value="Chromosome"/>
</dbReference>
<dbReference type="GO" id="GO:0005886">
    <property type="term" value="C:plasma membrane"/>
    <property type="evidence" value="ECO:0007669"/>
    <property type="project" value="UniProtKB-SubCell"/>
</dbReference>
<dbReference type="GO" id="GO:0055085">
    <property type="term" value="P:transmembrane transport"/>
    <property type="evidence" value="ECO:0007669"/>
    <property type="project" value="InterPro"/>
</dbReference>
<dbReference type="CDD" id="cd06261">
    <property type="entry name" value="TM_PBP2"/>
    <property type="match status" value="1"/>
</dbReference>
<dbReference type="Gene3D" id="1.10.3720.10">
    <property type="entry name" value="MetI-like"/>
    <property type="match status" value="1"/>
</dbReference>
<dbReference type="InterPro" id="IPR051789">
    <property type="entry name" value="Bact_Polyamine_Transport"/>
</dbReference>
<dbReference type="InterPro" id="IPR000515">
    <property type="entry name" value="MetI-like"/>
</dbReference>
<dbReference type="InterPro" id="IPR035906">
    <property type="entry name" value="MetI-like_sf"/>
</dbReference>
<dbReference type="PANTHER" id="PTHR43848">
    <property type="entry name" value="PUTRESCINE TRANSPORT SYSTEM PERMEASE PROTEIN POTI"/>
    <property type="match status" value="1"/>
</dbReference>
<dbReference type="PANTHER" id="PTHR43848:SF2">
    <property type="entry name" value="PUTRESCINE TRANSPORT SYSTEM PERMEASE PROTEIN POTI"/>
    <property type="match status" value="1"/>
</dbReference>
<dbReference type="Pfam" id="PF00528">
    <property type="entry name" value="BPD_transp_1"/>
    <property type="match status" value="1"/>
</dbReference>
<dbReference type="SUPFAM" id="SSF161098">
    <property type="entry name" value="MetI-like"/>
    <property type="match status" value="1"/>
</dbReference>
<dbReference type="PROSITE" id="PS50928">
    <property type="entry name" value="ABC_TM1"/>
    <property type="match status" value="1"/>
</dbReference>
<accession>P75057</accession>
<protein>
    <recommendedName>
        <fullName>Spermidine/putrescine transport system permease protein PotC homolog</fullName>
    </recommendedName>
</protein>
<gene>
    <name type="primary">potC</name>
    <name type="ordered locus">MPN_057</name>
    <name type="ORF">MP097</name>
</gene>
<organism>
    <name type="scientific">Mycoplasma pneumoniae (strain ATCC 29342 / M129 / Subtype 1)</name>
    <name type="common">Mycoplasmoides pneumoniae</name>
    <dbReference type="NCBI Taxonomy" id="272634"/>
    <lineage>
        <taxon>Bacteria</taxon>
        <taxon>Bacillati</taxon>
        <taxon>Mycoplasmatota</taxon>
        <taxon>Mycoplasmoidales</taxon>
        <taxon>Mycoplasmoidaceae</taxon>
        <taxon>Mycoplasmoides</taxon>
    </lineage>
</organism>
<keyword id="KW-1003">Cell membrane</keyword>
<keyword id="KW-0472">Membrane</keyword>
<keyword id="KW-1185">Reference proteome</keyword>
<keyword id="KW-0812">Transmembrane</keyword>
<keyword id="KW-1133">Transmembrane helix</keyword>
<keyword id="KW-0813">Transport</keyword>
<sequence>MFKMKSCKLWLRGSFFVIVLVLIYLPLIIVVLVSFNGSSTRGNIVLDFGNVLNPNPDAKSAYLRLGEADFAIPLLNSVIIGLITVIVSIPIAIMTAFALLRSRQWLNKTVFGIANFSLATPDIITGISLVLLFANTWLSFNQQLGFFTIISSHISFSVPYALVLIYPKMQKLNRNLILASQDLGYSPIATFFHITLPYLLPSILSAILVVFATSFDDYVITSLVQGSVKTVASELYSFRKGIKAWAIAFGTILILVSILAVLLVTLHKYLRFKHKEMLRVKQWKNS</sequence>
<evidence type="ECO:0000250" key="1"/>
<evidence type="ECO:0000255" key="2">
    <source>
        <dbReference type="PROSITE-ProRule" id="PRU00441"/>
    </source>
</evidence>
<evidence type="ECO:0000305" key="3"/>
<reference key="1">
    <citation type="journal article" date="1996" name="Nucleic Acids Res.">
        <title>Complete sequence analysis of the genome of the bacterium Mycoplasma pneumoniae.</title>
        <authorList>
            <person name="Himmelreich R."/>
            <person name="Hilbert H."/>
            <person name="Plagens H."/>
            <person name="Pirkl E."/>
            <person name="Li B.-C."/>
            <person name="Herrmann R."/>
        </authorList>
    </citation>
    <scope>NUCLEOTIDE SEQUENCE [LARGE SCALE GENOMIC DNA]</scope>
    <source>
        <strain>ATCC 29342 / M129 / Subtype 1</strain>
    </source>
</reference>
<name>POTC_MYCPN</name>
<comment type="function">
    <text evidence="1">Required for the activity of the bacterial transport system of putrescine and spermidine.</text>
</comment>
<comment type="subcellular location">
    <subcellularLocation>
        <location evidence="1">Cell membrane</location>
        <topology evidence="2">Multi-pass membrane protein</topology>
    </subcellularLocation>
</comment>
<comment type="similarity">
    <text evidence="3">Belongs to the binding-protein-dependent transport system permease family. CysTW subfamily.</text>
</comment>